<keyword id="KW-0997">Cell inner membrane</keyword>
<keyword id="KW-1003">Cell membrane</keyword>
<keyword id="KW-0328">Glycosyltransferase</keyword>
<keyword id="KW-0441">Lipid A biosynthesis</keyword>
<keyword id="KW-0444">Lipid biosynthesis</keyword>
<keyword id="KW-0443">Lipid metabolism</keyword>
<keyword id="KW-0448">Lipopolysaccharide biosynthesis</keyword>
<keyword id="KW-0472">Membrane</keyword>
<keyword id="KW-0808">Transferase</keyword>
<keyword id="KW-0812">Transmembrane</keyword>
<keyword id="KW-1133">Transmembrane helix</keyword>
<comment type="function">
    <text evidence="1">Catalyzes the transfer of the L-Ara4N moiety of the glycolipid undecaprenyl phosphate-alpha-L-Ara4N to lipid A. The modified arabinose is attached to lipid A and is required for resistance to polymyxin and cationic antimicrobial peptides.</text>
</comment>
<comment type="catalytic activity">
    <reaction evidence="1">
        <text>4-amino-4-deoxy-alpha-L-arabinopyranosyl di-trans,octa-cis-undecaprenyl phosphate + lipid IVA = lipid IIA + di-trans,octa-cis-undecaprenyl phosphate.</text>
        <dbReference type="EC" id="2.4.2.43"/>
    </reaction>
</comment>
<comment type="pathway">
    <text evidence="1">Lipopolysaccharide metabolism; 4-amino-4-deoxy-beta-L-arabinose-lipid A biosynthesis.</text>
</comment>
<comment type="subcellular location">
    <subcellularLocation>
        <location evidence="1">Cell inner membrane</location>
        <topology evidence="1">Multi-pass membrane protein</topology>
    </subcellularLocation>
</comment>
<comment type="similarity">
    <text evidence="1">Belongs to the glycosyltransferase 83 family.</text>
</comment>
<protein>
    <recommendedName>
        <fullName evidence="1">Undecaprenyl phosphate-alpha-4-amino-4-deoxy-L-arabinose arabinosyl transferase</fullName>
        <ecNumber evidence="1">2.4.2.43</ecNumber>
    </recommendedName>
    <alternativeName>
        <fullName evidence="1">4-amino-4-deoxy-L-arabinose lipid A transferase</fullName>
    </alternativeName>
    <alternativeName>
        <fullName evidence="1">Lipid IV(A) 4-amino-4-deoxy-L-arabinosyltransferase</fullName>
    </alternativeName>
    <alternativeName>
        <fullName evidence="1">Undecaprenyl phosphate-alpha-L-Ara4N transferase</fullName>
    </alternativeName>
</protein>
<organism>
    <name type="scientific">Pseudomonas aeruginosa (strain UCBPP-PA14)</name>
    <dbReference type="NCBI Taxonomy" id="208963"/>
    <lineage>
        <taxon>Bacteria</taxon>
        <taxon>Pseudomonadati</taxon>
        <taxon>Pseudomonadota</taxon>
        <taxon>Gammaproteobacteria</taxon>
        <taxon>Pseudomonadales</taxon>
        <taxon>Pseudomonadaceae</taxon>
        <taxon>Pseudomonas</taxon>
    </lineage>
</organism>
<dbReference type="EC" id="2.4.2.43" evidence="1"/>
<dbReference type="EMBL" id="CP000438">
    <property type="protein sequence ID" value="ABJ12790.1"/>
    <property type="molecule type" value="Genomic_DNA"/>
</dbReference>
<dbReference type="RefSeq" id="WP_003138078.1">
    <property type="nucleotide sequence ID" value="NZ_CP034244.1"/>
</dbReference>
<dbReference type="SMR" id="Q02R27"/>
<dbReference type="CAZy" id="GT83">
    <property type="family name" value="Glycosyltransferase Family 83"/>
</dbReference>
<dbReference type="KEGG" id="pau:PA14_18330"/>
<dbReference type="PseudoCAP" id="PA14_18330"/>
<dbReference type="HOGENOM" id="CLU_019200_2_1_6"/>
<dbReference type="BioCyc" id="PAER208963:G1G74-1512-MONOMER"/>
<dbReference type="UniPathway" id="UPA00037"/>
<dbReference type="Proteomes" id="UP000000653">
    <property type="component" value="Chromosome"/>
</dbReference>
<dbReference type="GO" id="GO:0005886">
    <property type="term" value="C:plasma membrane"/>
    <property type="evidence" value="ECO:0007669"/>
    <property type="project" value="UniProtKB-SubCell"/>
</dbReference>
<dbReference type="GO" id="GO:0103015">
    <property type="term" value="F:4-amino-4-deoxy-L-arabinose transferase activity"/>
    <property type="evidence" value="ECO:0007669"/>
    <property type="project" value="UniProtKB-EC"/>
</dbReference>
<dbReference type="GO" id="GO:0000030">
    <property type="term" value="F:mannosyltransferase activity"/>
    <property type="evidence" value="ECO:0007669"/>
    <property type="project" value="InterPro"/>
</dbReference>
<dbReference type="GO" id="GO:0009245">
    <property type="term" value="P:lipid A biosynthetic process"/>
    <property type="evidence" value="ECO:0007669"/>
    <property type="project" value="UniProtKB-UniRule"/>
</dbReference>
<dbReference type="GO" id="GO:0009103">
    <property type="term" value="P:lipopolysaccharide biosynthetic process"/>
    <property type="evidence" value="ECO:0007669"/>
    <property type="project" value="UniProtKB-KW"/>
</dbReference>
<dbReference type="GO" id="GO:0006493">
    <property type="term" value="P:protein O-linked glycosylation"/>
    <property type="evidence" value="ECO:0007669"/>
    <property type="project" value="InterPro"/>
</dbReference>
<dbReference type="GO" id="GO:0010041">
    <property type="term" value="P:response to iron(III) ion"/>
    <property type="evidence" value="ECO:0007669"/>
    <property type="project" value="TreeGrafter"/>
</dbReference>
<dbReference type="HAMAP" id="MF_01165">
    <property type="entry name" value="ArnT_transfer"/>
    <property type="match status" value="1"/>
</dbReference>
<dbReference type="InterPro" id="IPR022839">
    <property type="entry name" value="ArnT_tfrase"/>
</dbReference>
<dbReference type="InterPro" id="IPR003342">
    <property type="entry name" value="Glyco_trans_39/83"/>
</dbReference>
<dbReference type="InterPro" id="IPR050297">
    <property type="entry name" value="LipidA_mod_glycosyltrf_83"/>
</dbReference>
<dbReference type="NCBIfam" id="NF009784">
    <property type="entry name" value="PRK13279.1"/>
    <property type="match status" value="1"/>
</dbReference>
<dbReference type="PANTHER" id="PTHR33908">
    <property type="entry name" value="MANNOSYLTRANSFERASE YKCB-RELATED"/>
    <property type="match status" value="1"/>
</dbReference>
<dbReference type="PANTHER" id="PTHR33908:SF3">
    <property type="entry name" value="UNDECAPRENYL PHOSPHATE-ALPHA-4-AMINO-4-DEOXY-L-ARABINOSE ARABINOSYL TRANSFERASE"/>
    <property type="match status" value="1"/>
</dbReference>
<dbReference type="Pfam" id="PF02366">
    <property type="entry name" value="PMT"/>
    <property type="match status" value="1"/>
</dbReference>
<gene>
    <name evidence="1" type="primary">arnT</name>
    <name type="ordered locus">PA14_18330</name>
</gene>
<reference key="1">
    <citation type="journal article" date="2006" name="Genome Biol.">
        <title>Genomic analysis reveals that Pseudomonas aeruginosa virulence is combinatorial.</title>
        <authorList>
            <person name="Lee D.G."/>
            <person name="Urbach J.M."/>
            <person name="Wu G."/>
            <person name="Liberati N.T."/>
            <person name="Feinbaum R.L."/>
            <person name="Miyata S."/>
            <person name="Diggins L.T."/>
            <person name="He J."/>
            <person name="Saucier M."/>
            <person name="Deziel E."/>
            <person name="Friedman L."/>
            <person name="Li L."/>
            <person name="Grills G."/>
            <person name="Montgomery K."/>
            <person name="Kucherlapati R."/>
            <person name="Rahme L.G."/>
            <person name="Ausubel F.M."/>
        </authorList>
    </citation>
    <scope>NUCLEOTIDE SEQUENCE [LARGE SCALE GENOMIC DNA]</scope>
    <source>
        <strain>UCBPP-PA14</strain>
    </source>
</reference>
<feature type="chain" id="PRO_0000380017" description="Undecaprenyl phosphate-alpha-4-amino-4-deoxy-L-arabinose arabinosyl transferase">
    <location>
        <begin position="1"/>
        <end position="549"/>
    </location>
</feature>
<feature type="transmembrane region" description="Helical" evidence="1">
    <location>
        <begin position="9"/>
        <end position="29"/>
    </location>
</feature>
<feature type="transmembrane region" description="Helical" evidence="1">
    <location>
        <begin position="80"/>
        <end position="100"/>
    </location>
</feature>
<feature type="transmembrane region" description="Helical" evidence="1">
    <location>
        <begin position="112"/>
        <end position="132"/>
    </location>
</feature>
<feature type="transmembrane region" description="Helical" evidence="1">
    <location>
        <begin position="136"/>
        <end position="156"/>
    </location>
</feature>
<feature type="transmembrane region" description="Helical" evidence="1">
    <location>
        <begin position="166"/>
        <end position="186"/>
    </location>
</feature>
<feature type="transmembrane region" description="Helical" evidence="1">
    <location>
        <begin position="204"/>
        <end position="224"/>
    </location>
</feature>
<feature type="transmembrane region" description="Helical" evidence="1">
    <location>
        <begin position="256"/>
        <end position="276"/>
    </location>
</feature>
<feature type="transmembrane region" description="Helical" evidence="1">
    <location>
        <begin position="288"/>
        <end position="308"/>
    </location>
</feature>
<feature type="transmembrane region" description="Helical" evidence="1">
    <location>
        <begin position="312"/>
        <end position="332"/>
    </location>
</feature>
<feature type="transmembrane region" description="Helical" evidence="1">
    <location>
        <begin position="346"/>
        <end position="366"/>
    </location>
</feature>
<feature type="transmembrane region" description="Helical" evidence="1">
    <location>
        <begin position="376"/>
        <end position="396"/>
    </location>
</feature>
<feature type="transmembrane region" description="Helical" evidence="1">
    <location>
        <begin position="402"/>
        <end position="422"/>
    </location>
</feature>
<name>ARNT_PSEAB</name>
<sequence length="549" mass="61863">MSRRQTWSLLLIAFGLFYLVPLSNHGLWIPDETRYAQISQAMLLGGDWVSPHFLGLRYFEKPVAGYWMIALGQAVFGENLFGVRIASVVATALSVLLAYLLARRLWRDPRTSLACALLYASFGLIAGQSGYANLDPQFTFWVNLSLVALWYALDAGSRRARLLGWILLGLACGMGFLTKGFLAWLLPVLVALPYMLWQRRWRELLGYGALAVLAALLVCLPWALAVHAREADYWRFFFWHEHIRRFAGEDAQHSRPWWFYLPLLVVACLPWSGLLPSALRQAWHERRQAPVVFLALWLLLPLAFFSLSRGKLPTYIMPCLLPLALLMGHALVQRLRLGNSVALRGNGLLNLGLALLALAALAYLQLRKPVYQEEPFELFLVLLVIGAWAAAGLAQWRYPLRAWAAPLLASWVLIALLPAAMPNHVVQNKTPDLFVAEHLDELTGARHLLSNDLGAASALAWRLRRSDVTLYDTRGELKYGLSYPEHSQRSVPLADIRQWLWRARQDGSVAVLLRINSASDRYQLALLPGDGERYRNGNLVLAILPQVRP</sequence>
<evidence type="ECO:0000255" key="1">
    <source>
        <dbReference type="HAMAP-Rule" id="MF_01165"/>
    </source>
</evidence>
<proteinExistence type="inferred from homology"/>
<accession>Q02R27</accession>